<keyword id="KW-0997">Cell inner membrane</keyword>
<keyword id="KW-1003">Cell membrane</keyword>
<keyword id="KW-0378">Hydrolase</keyword>
<keyword id="KW-0472">Membrane</keyword>
<keyword id="KW-0479">Metal-binding</keyword>
<keyword id="KW-0482">Metalloprotease</keyword>
<keyword id="KW-0645">Protease</keyword>
<keyword id="KW-1185">Reference proteome</keyword>
<keyword id="KW-0812">Transmembrane</keyword>
<keyword id="KW-1133">Transmembrane helix</keyword>
<keyword id="KW-0862">Zinc</keyword>
<name>HTPX_RHIWR</name>
<dbReference type="EC" id="3.4.24.-" evidence="1"/>
<dbReference type="EMBL" id="CP000699">
    <property type="protein sequence ID" value="ABQ68299.1"/>
    <property type="molecule type" value="Genomic_DNA"/>
</dbReference>
<dbReference type="STRING" id="392499.Swit_1939"/>
<dbReference type="PaxDb" id="392499-Swit_1939"/>
<dbReference type="KEGG" id="swi:Swit_1939"/>
<dbReference type="eggNOG" id="COG0501">
    <property type="taxonomic scope" value="Bacteria"/>
</dbReference>
<dbReference type="HOGENOM" id="CLU_042266_3_0_5"/>
<dbReference type="OrthoDB" id="15218at2"/>
<dbReference type="Proteomes" id="UP000001989">
    <property type="component" value="Chromosome"/>
</dbReference>
<dbReference type="GO" id="GO:0005886">
    <property type="term" value="C:plasma membrane"/>
    <property type="evidence" value="ECO:0007669"/>
    <property type="project" value="UniProtKB-SubCell"/>
</dbReference>
<dbReference type="GO" id="GO:0004222">
    <property type="term" value="F:metalloendopeptidase activity"/>
    <property type="evidence" value="ECO:0007669"/>
    <property type="project" value="UniProtKB-UniRule"/>
</dbReference>
<dbReference type="GO" id="GO:0008270">
    <property type="term" value="F:zinc ion binding"/>
    <property type="evidence" value="ECO:0007669"/>
    <property type="project" value="UniProtKB-UniRule"/>
</dbReference>
<dbReference type="GO" id="GO:0006508">
    <property type="term" value="P:proteolysis"/>
    <property type="evidence" value="ECO:0007669"/>
    <property type="project" value="UniProtKB-KW"/>
</dbReference>
<dbReference type="CDD" id="cd07336">
    <property type="entry name" value="M48B_HtpX_like"/>
    <property type="match status" value="1"/>
</dbReference>
<dbReference type="Gene3D" id="3.30.2010.10">
    <property type="entry name" value="Metalloproteases ('zincins'), catalytic domain"/>
    <property type="match status" value="1"/>
</dbReference>
<dbReference type="HAMAP" id="MF_00188">
    <property type="entry name" value="Pept_M48_protease_HtpX"/>
    <property type="match status" value="1"/>
</dbReference>
<dbReference type="InterPro" id="IPR050083">
    <property type="entry name" value="HtpX_protease"/>
</dbReference>
<dbReference type="InterPro" id="IPR022919">
    <property type="entry name" value="Pept_M48_protease_HtpX"/>
</dbReference>
<dbReference type="InterPro" id="IPR001915">
    <property type="entry name" value="Peptidase_M48"/>
</dbReference>
<dbReference type="NCBIfam" id="NF002363">
    <property type="entry name" value="PRK01345.1"/>
    <property type="match status" value="1"/>
</dbReference>
<dbReference type="NCBIfam" id="NF002826">
    <property type="entry name" value="PRK03001.1"/>
    <property type="match status" value="1"/>
</dbReference>
<dbReference type="PANTHER" id="PTHR43221">
    <property type="entry name" value="PROTEASE HTPX"/>
    <property type="match status" value="1"/>
</dbReference>
<dbReference type="PANTHER" id="PTHR43221:SF1">
    <property type="entry name" value="PROTEASE HTPX"/>
    <property type="match status" value="1"/>
</dbReference>
<dbReference type="Pfam" id="PF01435">
    <property type="entry name" value="Peptidase_M48"/>
    <property type="match status" value="1"/>
</dbReference>
<protein>
    <recommendedName>
        <fullName evidence="1">Protease HtpX homolog</fullName>
        <ecNumber evidence="1">3.4.24.-</ecNumber>
    </recommendedName>
</protein>
<sequence>MNMLKTTMLLAALTALFMALGFTIGGTGGAMIALVVAAGMNLFTFWNADSIVLRMHGAREVDAQNCPEFVGLVAGLARRANLPMPRVYIIDSEHPNAFATGRNPENAAVAATTGLLAILNRDEIEGVMAHELAHVRNRDTLIMTMTATIAGAISMLANFGMFFGAGRRDGGQVLATILAVFVAPFAAMIVQMAISRAREYGADRGGAEISGKPQALASALAKLANGAARIPNPVVERNPAAAALYIVPGMKRDGDSLFATHPATENRIAHLEAIANEMGVSSPSPNFAALSERRGSVSSVPRTRRRSSALDPNGRG</sequence>
<comment type="cofactor">
    <cofactor evidence="1">
        <name>Zn(2+)</name>
        <dbReference type="ChEBI" id="CHEBI:29105"/>
    </cofactor>
    <text evidence="1">Binds 1 zinc ion per subunit.</text>
</comment>
<comment type="subcellular location">
    <subcellularLocation>
        <location evidence="1">Cell inner membrane</location>
        <topology evidence="1">Multi-pass membrane protein</topology>
    </subcellularLocation>
</comment>
<comment type="similarity">
    <text evidence="1">Belongs to the peptidase M48B family.</text>
</comment>
<evidence type="ECO:0000255" key="1">
    <source>
        <dbReference type="HAMAP-Rule" id="MF_00188"/>
    </source>
</evidence>
<evidence type="ECO:0000256" key="2">
    <source>
        <dbReference type="SAM" id="MobiDB-lite"/>
    </source>
</evidence>
<accession>A5V7N3</accession>
<reference key="1">
    <citation type="journal article" date="2010" name="J. Bacteriol.">
        <title>Genome sequence of the dioxin-mineralizing bacterium Sphingomonas wittichii RW1.</title>
        <authorList>
            <person name="Miller T.R."/>
            <person name="Delcher A.L."/>
            <person name="Salzberg S.L."/>
            <person name="Saunders E."/>
            <person name="Detter J.C."/>
            <person name="Halden R.U."/>
        </authorList>
    </citation>
    <scope>NUCLEOTIDE SEQUENCE [LARGE SCALE GENOMIC DNA]</scope>
    <source>
        <strain>DSM 6014 / CCUG 31198 / JCM 15750 / NBRC 105917 / EY 4224 / RW1</strain>
    </source>
</reference>
<organism>
    <name type="scientific">Rhizorhabdus wittichii (strain DSM 6014 / CCUG 31198 / JCM 15750 / NBRC 105917 / EY 4224 / RW1)</name>
    <name type="common">Sphingomonas wittichii</name>
    <dbReference type="NCBI Taxonomy" id="392499"/>
    <lineage>
        <taxon>Bacteria</taxon>
        <taxon>Pseudomonadati</taxon>
        <taxon>Pseudomonadota</taxon>
        <taxon>Alphaproteobacteria</taxon>
        <taxon>Sphingomonadales</taxon>
        <taxon>Sphingomonadaceae</taxon>
        <taxon>Rhizorhabdus</taxon>
    </lineage>
</organism>
<gene>
    <name evidence="1" type="primary">htpX</name>
    <name type="ordered locus">Swit_1939</name>
</gene>
<feature type="chain" id="PRO_1000020948" description="Protease HtpX homolog">
    <location>
        <begin position="1"/>
        <end position="316"/>
    </location>
</feature>
<feature type="transmembrane region" description="Helical" evidence="1">
    <location>
        <begin position="16"/>
        <end position="36"/>
    </location>
</feature>
<feature type="transmembrane region" description="Helical" evidence="1">
    <location>
        <begin position="145"/>
        <end position="165"/>
    </location>
</feature>
<feature type="transmembrane region" description="Helical" evidence="1">
    <location>
        <begin position="174"/>
        <end position="194"/>
    </location>
</feature>
<feature type="region of interest" description="Disordered" evidence="2">
    <location>
        <begin position="285"/>
        <end position="316"/>
    </location>
</feature>
<feature type="active site" evidence="1">
    <location>
        <position position="131"/>
    </location>
</feature>
<feature type="binding site" evidence="1">
    <location>
        <position position="130"/>
    </location>
    <ligand>
        <name>Zn(2+)</name>
        <dbReference type="ChEBI" id="CHEBI:29105"/>
        <note>catalytic</note>
    </ligand>
</feature>
<feature type="binding site" evidence="1">
    <location>
        <position position="134"/>
    </location>
    <ligand>
        <name>Zn(2+)</name>
        <dbReference type="ChEBI" id="CHEBI:29105"/>
        <note>catalytic</note>
    </ligand>
</feature>
<feature type="binding site" evidence="1">
    <location>
        <position position="199"/>
    </location>
    <ligand>
        <name>Zn(2+)</name>
        <dbReference type="ChEBI" id="CHEBI:29105"/>
        <note>catalytic</note>
    </ligand>
</feature>
<proteinExistence type="inferred from homology"/>